<keyword id="KW-0963">Cytoplasm</keyword>
<keyword id="KW-0328">Glycosyltransferase</keyword>
<keyword id="KW-0660">Purine salvage</keyword>
<keyword id="KW-1185">Reference proteome</keyword>
<keyword id="KW-0808">Transferase</keyword>
<gene>
    <name evidence="1" type="primary">apt</name>
    <name type="ordered locus">SCO1514</name>
    <name type="ORF">SCL2.04c</name>
</gene>
<reference key="1">
    <citation type="journal article" date="1996" name="Mol. Microbiol.">
        <title>Cloning, characterization and disruption of a (p)ppGpp synthetase gene (relA) of Streptomyces coelicolor A3(2).</title>
        <authorList>
            <person name="Chakraburtty R."/>
            <person name="White J."/>
            <person name="Takano E."/>
            <person name="Bibb M.J."/>
        </authorList>
    </citation>
    <scope>NUCLEOTIDE SEQUENCE [GENOMIC DNA]</scope>
    <source>
        <strain>ATCC BAA-471 / A3(2) / M145</strain>
    </source>
</reference>
<reference key="2">
    <citation type="submission" date="1995-03" db="EMBL/GenBank/DDBJ databases">
        <authorList>
            <person name="Loriaux A."/>
            <person name="Frare P."/>
            <person name="Brans A."/>
            <person name="Dusart J."/>
        </authorList>
    </citation>
    <scope>NUCLEOTIDE SEQUENCE [GENOMIC DNA]</scope>
    <source>
        <strain>A3(2) / NRRL B-16638</strain>
    </source>
</reference>
<reference key="3">
    <citation type="journal article" date="2002" name="Nature">
        <title>Complete genome sequence of the model actinomycete Streptomyces coelicolor A3(2).</title>
        <authorList>
            <person name="Bentley S.D."/>
            <person name="Chater K.F."/>
            <person name="Cerdeno-Tarraga A.-M."/>
            <person name="Challis G.L."/>
            <person name="Thomson N.R."/>
            <person name="James K.D."/>
            <person name="Harris D.E."/>
            <person name="Quail M.A."/>
            <person name="Kieser H."/>
            <person name="Harper D."/>
            <person name="Bateman A."/>
            <person name="Brown S."/>
            <person name="Chandra G."/>
            <person name="Chen C.W."/>
            <person name="Collins M."/>
            <person name="Cronin A."/>
            <person name="Fraser A."/>
            <person name="Goble A."/>
            <person name="Hidalgo J."/>
            <person name="Hornsby T."/>
            <person name="Howarth S."/>
            <person name="Huang C.-H."/>
            <person name="Kieser T."/>
            <person name="Larke L."/>
            <person name="Murphy L.D."/>
            <person name="Oliver K."/>
            <person name="O'Neil S."/>
            <person name="Rabbinowitsch E."/>
            <person name="Rajandream M.A."/>
            <person name="Rutherford K.M."/>
            <person name="Rutter S."/>
            <person name="Seeger K."/>
            <person name="Saunders D."/>
            <person name="Sharp S."/>
            <person name="Squares R."/>
            <person name="Squares S."/>
            <person name="Taylor K."/>
            <person name="Warren T."/>
            <person name="Wietzorrek A."/>
            <person name="Woodward J.R."/>
            <person name="Barrell B.G."/>
            <person name="Parkhill J."/>
            <person name="Hopwood D.A."/>
        </authorList>
    </citation>
    <scope>NUCLEOTIDE SEQUENCE [LARGE SCALE GENOMIC DNA]</scope>
    <source>
        <strain>ATCC BAA-471 / A3(2) / M145</strain>
    </source>
</reference>
<reference key="4">
    <citation type="journal article" date="1996" name="J. Biol. Chem.">
        <title>A relA/spoT homologous gene from Streptomyces coelicolor A3(2) controls antibiotic biosynthetic genes.</title>
        <authorList>
            <person name="Martinez-Costa O.H."/>
            <person name="Arias P."/>
            <person name="Romero N.M."/>
            <person name="Parro V."/>
            <person name="Mellado R.P."/>
            <person name="Malpartida F."/>
        </authorList>
    </citation>
    <scope>NUCLEOTIDE SEQUENCE [GENOMIC DNA] OF 142-182</scope>
    <source>
        <strain>A3(2) / J802</strain>
    </source>
</reference>
<comment type="function">
    <text evidence="1">Catalyzes a salvage reaction resulting in the formation of AMP, that is energically less costly than de novo synthesis.</text>
</comment>
<comment type="catalytic activity">
    <reaction evidence="1">
        <text>AMP + diphosphate = 5-phospho-alpha-D-ribose 1-diphosphate + adenine</text>
        <dbReference type="Rhea" id="RHEA:16609"/>
        <dbReference type="ChEBI" id="CHEBI:16708"/>
        <dbReference type="ChEBI" id="CHEBI:33019"/>
        <dbReference type="ChEBI" id="CHEBI:58017"/>
        <dbReference type="ChEBI" id="CHEBI:456215"/>
        <dbReference type="EC" id="2.4.2.7"/>
    </reaction>
</comment>
<comment type="pathway">
    <text evidence="1">Purine metabolism; AMP biosynthesis via salvage pathway; AMP from adenine: step 1/1.</text>
</comment>
<comment type="subunit">
    <text evidence="1">Homodimer.</text>
</comment>
<comment type="subcellular location">
    <subcellularLocation>
        <location evidence="1">Cytoplasm</location>
    </subcellularLocation>
</comment>
<comment type="similarity">
    <text evidence="1">Belongs to the purine/pyrimidine phosphoribosyltransferase family.</text>
</comment>
<comment type="sequence caution" evidence="2">
    <conflict type="erroneous initiation">
        <sequence resource="EMBL-CDS" id="CAB70916"/>
    </conflict>
</comment>
<feature type="chain" id="PRO_0000149462" description="Adenine phosphoribosyltransferase">
    <location>
        <begin position="1"/>
        <end position="182"/>
    </location>
</feature>
<feature type="sequence conflict" description="In Ref. 2; CAA59956." evidence="2" ref="2">
    <original>YG</original>
    <variation>VS</variation>
    <location>
        <begin position="104"/>
        <end position="105"/>
    </location>
</feature>
<feature type="sequence conflict" description="In Ref. 2; CAA59956." evidence="2" ref="2">
    <original>E</original>
    <variation>K</variation>
    <location>
        <position position="136"/>
    </location>
</feature>
<proteinExistence type="inferred from homology"/>
<sequence>MTEPTGITELLLSRIRDVADYPEPGVVFKDITPLLADPGAFAALTDALAEAAGRTGATKVVGLEARGFILGAPVALRAGLGFIPVRKAGKLPGATLSQAYDLEYGSAEIEVHAEDLTAGDRVLVVDDVLATGGTAEASLELIRRAGAEVAGLAVLMELGFLGGRARLEPALAGAPLEALLTV</sequence>
<name>APT_STRCO</name>
<protein>
    <recommendedName>
        <fullName evidence="1">Adenine phosphoribosyltransferase</fullName>
        <shortName evidence="1">APRT</shortName>
        <ecNumber evidence="1">2.4.2.7</ecNumber>
    </recommendedName>
</protein>
<organism>
    <name type="scientific">Streptomyces coelicolor (strain ATCC BAA-471 / A3(2) / M145)</name>
    <dbReference type="NCBI Taxonomy" id="100226"/>
    <lineage>
        <taxon>Bacteria</taxon>
        <taxon>Bacillati</taxon>
        <taxon>Actinomycetota</taxon>
        <taxon>Actinomycetes</taxon>
        <taxon>Kitasatosporales</taxon>
        <taxon>Streptomycetaceae</taxon>
        <taxon>Streptomyces</taxon>
        <taxon>Streptomyces albidoflavus group</taxon>
    </lineage>
</organism>
<evidence type="ECO:0000255" key="1">
    <source>
        <dbReference type="HAMAP-Rule" id="MF_00004"/>
    </source>
</evidence>
<evidence type="ECO:0000305" key="2"/>
<accession>P52561</accession>
<accession>Q9L294</accession>
<dbReference type="EC" id="2.4.2.7" evidence="1"/>
<dbReference type="EMBL" id="X87267">
    <property type="protein sequence ID" value="CAA60716.1"/>
    <property type="molecule type" value="Genomic_DNA"/>
</dbReference>
<dbReference type="EMBL" id="X85969">
    <property type="protein sequence ID" value="CAA59956.1"/>
    <property type="molecule type" value="Genomic_DNA"/>
</dbReference>
<dbReference type="EMBL" id="AL939109">
    <property type="protein sequence ID" value="CAB70916.1"/>
    <property type="status" value="ALT_INIT"/>
    <property type="molecule type" value="Genomic_DNA"/>
</dbReference>
<dbReference type="EMBL" id="X92520">
    <property type="protein sequence ID" value="CAA63298.1"/>
    <property type="molecule type" value="Genomic_DNA"/>
</dbReference>
<dbReference type="PIR" id="S70689">
    <property type="entry name" value="S70689"/>
</dbReference>
<dbReference type="RefSeq" id="NP_625793.1">
    <property type="nucleotide sequence ID" value="NC_003888.3"/>
</dbReference>
<dbReference type="RefSeq" id="WP_016325803.1">
    <property type="nucleotide sequence ID" value="NZ_VNID01000021.1"/>
</dbReference>
<dbReference type="SMR" id="P52561"/>
<dbReference type="FunCoup" id="P52561">
    <property type="interactions" value="277"/>
</dbReference>
<dbReference type="STRING" id="100226.gene:17759100"/>
<dbReference type="PaxDb" id="100226-SCO1514"/>
<dbReference type="KEGG" id="sco:SCO1514"/>
<dbReference type="PATRIC" id="fig|100226.15.peg.1523"/>
<dbReference type="eggNOG" id="COG0503">
    <property type="taxonomic scope" value="Bacteria"/>
</dbReference>
<dbReference type="HOGENOM" id="CLU_063339_3_3_11"/>
<dbReference type="InParanoid" id="P52561"/>
<dbReference type="OrthoDB" id="9803963at2"/>
<dbReference type="PhylomeDB" id="P52561"/>
<dbReference type="UniPathway" id="UPA00588">
    <property type="reaction ID" value="UER00646"/>
</dbReference>
<dbReference type="Proteomes" id="UP000001973">
    <property type="component" value="Chromosome"/>
</dbReference>
<dbReference type="GO" id="GO:0005737">
    <property type="term" value="C:cytoplasm"/>
    <property type="evidence" value="ECO:0000318"/>
    <property type="project" value="GO_Central"/>
</dbReference>
<dbReference type="GO" id="GO:0002055">
    <property type="term" value="F:adenine binding"/>
    <property type="evidence" value="ECO:0000318"/>
    <property type="project" value="GO_Central"/>
</dbReference>
<dbReference type="GO" id="GO:0003999">
    <property type="term" value="F:adenine phosphoribosyltransferase activity"/>
    <property type="evidence" value="ECO:0000318"/>
    <property type="project" value="GO_Central"/>
</dbReference>
<dbReference type="GO" id="GO:0016208">
    <property type="term" value="F:AMP binding"/>
    <property type="evidence" value="ECO:0000318"/>
    <property type="project" value="GO_Central"/>
</dbReference>
<dbReference type="GO" id="GO:0006168">
    <property type="term" value="P:adenine salvage"/>
    <property type="evidence" value="ECO:0000318"/>
    <property type="project" value="GO_Central"/>
</dbReference>
<dbReference type="GO" id="GO:0044209">
    <property type="term" value="P:AMP salvage"/>
    <property type="evidence" value="ECO:0000318"/>
    <property type="project" value="GO_Central"/>
</dbReference>
<dbReference type="GO" id="GO:0006166">
    <property type="term" value="P:purine ribonucleoside salvage"/>
    <property type="evidence" value="ECO:0007669"/>
    <property type="project" value="UniProtKB-KW"/>
</dbReference>
<dbReference type="CDD" id="cd06223">
    <property type="entry name" value="PRTases_typeI"/>
    <property type="match status" value="1"/>
</dbReference>
<dbReference type="FunFam" id="3.40.50.2020:FF:000021">
    <property type="entry name" value="Adenine phosphoribosyltransferase"/>
    <property type="match status" value="1"/>
</dbReference>
<dbReference type="Gene3D" id="3.40.50.2020">
    <property type="match status" value="1"/>
</dbReference>
<dbReference type="HAMAP" id="MF_00004">
    <property type="entry name" value="Aden_phosphoribosyltr"/>
    <property type="match status" value="1"/>
</dbReference>
<dbReference type="InterPro" id="IPR005764">
    <property type="entry name" value="Ade_phspho_trans"/>
</dbReference>
<dbReference type="InterPro" id="IPR000836">
    <property type="entry name" value="PRibTrfase_dom"/>
</dbReference>
<dbReference type="InterPro" id="IPR029057">
    <property type="entry name" value="PRTase-like"/>
</dbReference>
<dbReference type="InterPro" id="IPR050054">
    <property type="entry name" value="UPRTase/APRTase"/>
</dbReference>
<dbReference type="NCBIfam" id="TIGR01090">
    <property type="entry name" value="apt"/>
    <property type="match status" value="1"/>
</dbReference>
<dbReference type="NCBIfam" id="NF002634">
    <property type="entry name" value="PRK02304.1-3"/>
    <property type="match status" value="1"/>
</dbReference>
<dbReference type="NCBIfam" id="NF002636">
    <property type="entry name" value="PRK02304.1-5"/>
    <property type="match status" value="1"/>
</dbReference>
<dbReference type="PANTHER" id="PTHR32315">
    <property type="entry name" value="ADENINE PHOSPHORIBOSYLTRANSFERASE"/>
    <property type="match status" value="1"/>
</dbReference>
<dbReference type="PANTHER" id="PTHR32315:SF3">
    <property type="entry name" value="ADENINE PHOSPHORIBOSYLTRANSFERASE"/>
    <property type="match status" value="1"/>
</dbReference>
<dbReference type="Pfam" id="PF00156">
    <property type="entry name" value="Pribosyltran"/>
    <property type="match status" value="1"/>
</dbReference>
<dbReference type="SUPFAM" id="SSF53271">
    <property type="entry name" value="PRTase-like"/>
    <property type="match status" value="1"/>
</dbReference>
<dbReference type="PROSITE" id="PS00103">
    <property type="entry name" value="PUR_PYR_PR_TRANSFER"/>
    <property type="match status" value="1"/>
</dbReference>